<name>L1103_FRATN</name>
<comment type="function">
    <text evidence="2">Stimulates the host immune inflammatory signaling system allowing the host to combat the bacteria. Stimulates mouse interleukin-6 (Il6) production (PubMed:23584588).</text>
</comment>
<comment type="subcellular location">
    <subcellularLocation>
        <location evidence="1">Cell membrane</location>
        <topology evidence="1">Lipid-anchor</topology>
    </subcellularLocation>
</comment>
<comment type="induction">
    <text evidence="2">During infection of mouse bone marrow-derived macrophages (BMDM) expression decreases when the bacteria is expected to be in the phagosome. Disruption of genes for cas9 or either of its associated tracrRNA or scaRNA increases transcript levels about 100-fold both in culture and in mouse BMDM.</text>
</comment>
<comment type="disruption phenotype">
    <text evidence="2">Significantly decreases interleukin-6 (Il6) production in a Tlr2-dependent fashion by C57BL/6 mouse BMDM.</text>
</comment>
<dbReference type="EMBL" id="CP000439">
    <property type="protein sequence ID" value="ABK89989.1"/>
    <property type="molecule type" value="Genomic_DNA"/>
</dbReference>
<dbReference type="RefSeq" id="WP_003039722.1">
    <property type="nucleotide sequence ID" value="NC_008601.1"/>
</dbReference>
<dbReference type="KEGG" id="ftn:FTN_1103"/>
<dbReference type="KEGG" id="ftx:AW25_905"/>
<dbReference type="BioCyc" id="FTUL401614:G1G75-1145-MONOMER"/>
<dbReference type="Proteomes" id="UP000000762">
    <property type="component" value="Chromosome"/>
</dbReference>
<dbReference type="GO" id="GO:0005886">
    <property type="term" value="C:plasma membrane"/>
    <property type="evidence" value="ECO:0007669"/>
    <property type="project" value="UniProtKB-SubCell"/>
</dbReference>
<dbReference type="InterPro" id="IPR021699">
    <property type="entry name" value="DUF3281"/>
</dbReference>
<dbReference type="Pfam" id="PF11685">
    <property type="entry name" value="DUF3281"/>
    <property type="match status" value="1"/>
</dbReference>
<dbReference type="PROSITE" id="PS51257">
    <property type="entry name" value="PROKAR_LIPOPROTEIN"/>
    <property type="match status" value="1"/>
</dbReference>
<organism>
    <name type="scientific">Francisella tularensis subsp. novicida (strain U112)</name>
    <dbReference type="NCBI Taxonomy" id="401614"/>
    <lineage>
        <taxon>Bacteria</taxon>
        <taxon>Pseudomonadati</taxon>
        <taxon>Pseudomonadota</taxon>
        <taxon>Gammaproteobacteria</taxon>
        <taxon>Thiotrichales</taxon>
        <taxon>Francisellaceae</taxon>
        <taxon>Francisella</taxon>
    </lineage>
</organism>
<sequence length="282" mass="30599">MKYGNLMMTKKKLLIGMVTISGIVILGSCGKTETVNELLIVDQCNDVRDLCRLELANAQVSRYTNFLGKTIKRLQSQTPLRDIQGTVTWNASAGTSLADNSDVQSELGLSCQDDNCTANSNSTAYTLPVGSNTISVSGTVTVDGKTIDLATDVPALVINTSAAGSSVHVFPTELEGNLTLQDLVDSLNQGRHYAHATFSADGSNLKIQCDPGYVWLDDINPEYGGQSSAASARSVAMVSWVEELEEFRVDEFRFLHFDMSSLTLNGVRLGNHVFWEMGCWPT</sequence>
<protein>
    <recommendedName>
        <fullName>Bacterial lipoprotein FTN_1103</fullName>
        <shortName evidence="3">BLP</shortName>
    </recommendedName>
</protein>
<gene>
    <name type="ordered locus">FTN_1103</name>
</gene>
<feature type="signal peptide" evidence="1">
    <location>
        <begin position="1"/>
        <end position="28"/>
    </location>
</feature>
<feature type="chain" id="PRO_0000436107" description="Bacterial lipoprotein FTN_1103" evidence="1">
    <location>
        <begin position="29"/>
        <end position="282"/>
    </location>
</feature>
<feature type="lipid moiety-binding region" description="N-palmitoyl cysteine" evidence="1">
    <location>
        <position position="29"/>
    </location>
</feature>
<feature type="lipid moiety-binding region" description="S-diacylglycerol cysteine" evidence="1">
    <location>
        <position position="29"/>
    </location>
</feature>
<accession>A0Q6X4</accession>
<reference key="1">
    <citation type="journal article" date="2007" name="Genome Biol.">
        <title>Comparison of Francisella tularensis genomes reveals evolutionary events associated with the emergence of human pathogenic strains.</title>
        <authorList>
            <person name="Rohmer L."/>
            <person name="Fong C."/>
            <person name="Abmayr S."/>
            <person name="Wasnick M."/>
            <person name="Larson Freeman T.J."/>
            <person name="Radey M."/>
            <person name="Guina T."/>
            <person name="Svensson K."/>
            <person name="Hayden H.S."/>
            <person name="Jacobs M."/>
            <person name="Gallagher L.A."/>
            <person name="Manoil C."/>
            <person name="Ernst R.K."/>
            <person name="Drees B."/>
            <person name="Buckley D."/>
            <person name="Haugen E."/>
            <person name="Bovee D."/>
            <person name="Zhou Y."/>
            <person name="Chang J."/>
            <person name="Levy R."/>
            <person name="Lim R."/>
            <person name="Gillett W."/>
            <person name="Guenthener D."/>
            <person name="Kang A."/>
            <person name="Shaffer S.A."/>
            <person name="Taylor G."/>
            <person name="Chen J."/>
            <person name="Gallis B."/>
            <person name="D'Argenio D.A."/>
            <person name="Forsman M."/>
            <person name="Olson M.V."/>
            <person name="Goodlett D.R."/>
            <person name="Kaul R."/>
            <person name="Miller S.I."/>
            <person name="Brittnacher M.J."/>
        </authorList>
    </citation>
    <scope>NUCLEOTIDE SEQUENCE [LARGE SCALE GENOMIC DNA]</scope>
    <source>
        <strain>U112</strain>
    </source>
</reference>
<reference key="2">
    <citation type="journal article" date="2013" name="Nature">
        <title>A CRISPR/Cas system mediates bacterial innate immune evasion and virulence.</title>
        <authorList>
            <person name="Sampson T.R."/>
            <person name="Saroj S.D."/>
            <person name="Llewellyn A.C."/>
            <person name="Tzeng Y.L."/>
            <person name="Weiss D.S."/>
        </authorList>
    </citation>
    <scope>FUNCTION IN VIRULENCE</scope>
    <scope>INDUCTION</scope>
    <scope>DISRUPTION PHENOTYPE</scope>
    <source>
        <strain>U112</strain>
    </source>
</reference>
<reference key="3">
    <citation type="journal article" date="2013" name="Nature">
        <authorList>
            <person name="Sampson T.R."/>
            <person name="Saroj S.D."/>
            <person name="Llewellyn A.C."/>
            <person name="Tzeng Y.L."/>
            <person name="Weiss D.S."/>
        </authorList>
    </citation>
    <scope>ERRATUM OF PUBMED:23584588</scope>
</reference>
<proteinExistence type="evidence at protein level"/>
<keyword id="KW-1003">Cell membrane</keyword>
<keyword id="KW-0449">Lipoprotein</keyword>
<keyword id="KW-0472">Membrane</keyword>
<keyword id="KW-0564">Palmitate</keyword>
<keyword id="KW-0732">Signal</keyword>
<keyword id="KW-0843">Virulence</keyword>
<evidence type="ECO:0000255" key="1">
    <source>
        <dbReference type="PROSITE-ProRule" id="PRU00303"/>
    </source>
</evidence>
<evidence type="ECO:0000269" key="2">
    <source>
    </source>
</evidence>
<evidence type="ECO:0000303" key="3">
    <source>
    </source>
</evidence>